<sequence length="427" mass="49450">MTWFIDRRLNGKNKSMVNRQRFLRRYKAQIKQSISEAINKRSVTDVDSGESVSIPTEDISEPMFHQGRGGLRHRVHPGNDHFVQNDRIERPQGGGGGSGSGQGQASQDGEGQDEFVFQISKDEYLDLLFEDLALPNLKQNQQRQLTEYKTHRAGYTANGVPANISVVRSLQNSLARRTAMTAGKRRELHALEENLAIISNSEPAQLLEEERLRKEIAELRAKIERVPFIDTFDLRYKNYEKRPDPSSQAVMFCLMDVSGSMDQSTKDMAKRFYILLYLFLSRTYKNVEVVYIRHHTQAKEVDEHEFFYSQETGGTIVSSALKLMDEVVKERYNPAQWNIYAAQASDGDNWADDSPLCHEILAKKLLPVVRYYSYIEITRRAHQTLWREYEHLQSTFDNFAMQHIRDQDDIYPVFRELFHKQNATAKD</sequence>
<dbReference type="EMBL" id="CU928163">
    <property type="protein sequence ID" value="CAR13269.1"/>
    <property type="molecule type" value="Genomic_DNA"/>
</dbReference>
<dbReference type="RefSeq" id="WP_000219686.1">
    <property type="nucleotide sequence ID" value="NC_011751.1"/>
</dbReference>
<dbReference type="RefSeq" id="YP_002412801.1">
    <property type="nucleotide sequence ID" value="NC_011751.1"/>
</dbReference>
<dbReference type="SMR" id="B7NBC9"/>
<dbReference type="STRING" id="585056.ECUMN_2073"/>
<dbReference type="KEGG" id="eum:ECUMN_2073"/>
<dbReference type="PATRIC" id="fig|585056.7.peg.2260"/>
<dbReference type="HOGENOM" id="CLU_049702_0_0_6"/>
<dbReference type="Proteomes" id="UP000007097">
    <property type="component" value="Chromosome"/>
</dbReference>
<dbReference type="HAMAP" id="MF_01232">
    <property type="entry name" value="UPF0229"/>
    <property type="match status" value="1"/>
</dbReference>
<dbReference type="InterPro" id="IPR006698">
    <property type="entry name" value="UPF0229"/>
</dbReference>
<dbReference type="NCBIfam" id="NF003707">
    <property type="entry name" value="PRK05325.1-2"/>
    <property type="match status" value="1"/>
</dbReference>
<dbReference type="NCBIfam" id="NF003708">
    <property type="entry name" value="PRK05325.1-3"/>
    <property type="match status" value="1"/>
</dbReference>
<dbReference type="PANTHER" id="PTHR30510">
    <property type="entry name" value="UPF0229 PROTEIN YEAH"/>
    <property type="match status" value="1"/>
</dbReference>
<dbReference type="PANTHER" id="PTHR30510:SF2">
    <property type="entry name" value="UPF0229 PROTEIN YEAH"/>
    <property type="match status" value="1"/>
</dbReference>
<dbReference type="Pfam" id="PF04285">
    <property type="entry name" value="DUF444"/>
    <property type="match status" value="1"/>
</dbReference>
<protein>
    <recommendedName>
        <fullName evidence="1">UPF0229 protein YeaH</fullName>
    </recommendedName>
</protein>
<gene>
    <name evidence="1" type="primary">yeaH</name>
    <name type="ordered locus">ECUMN_2073</name>
</gene>
<accession>B7NBC9</accession>
<name>YEAH_ECOLU</name>
<evidence type="ECO:0000255" key="1">
    <source>
        <dbReference type="HAMAP-Rule" id="MF_01232"/>
    </source>
</evidence>
<evidence type="ECO:0000256" key="2">
    <source>
        <dbReference type="SAM" id="MobiDB-lite"/>
    </source>
</evidence>
<organism>
    <name type="scientific">Escherichia coli O17:K52:H18 (strain UMN026 / ExPEC)</name>
    <dbReference type="NCBI Taxonomy" id="585056"/>
    <lineage>
        <taxon>Bacteria</taxon>
        <taxon>Pseudomonadati</taxon>
        <taxon>Pseudomonadota</taxon>
        <taxon>Gammaproteobacteria</taxon>
        <taxon>Enterobacterales</taxon>
        <taxon>Enterobacteriaceae</taxon>
        <taxon>Escherichia</taxon>
    </lineage>
</organism>
<reference key="1">
    <citation type="journal article" date="2009" name="PLoS Genet.">
        <title>Organised genome dynamics in the Escherichia coli species results in highly diverse adaptive paths.</title>
        <authorList>
            <person name="Touchon M."/>
            <person name="Hoede C."/>
            <person name="Tenaillon O."/>
            <person name="Barbe V."/>
            <person name="Baeriswyl S."/>
            <person name="Bidet P."/>
            <person name="Bingen E."/>
            <person name="Bonacorsi S."/>
            <person name="Bouchier C."/>
            <person name="Bouvet O."/>
            <person name="Calteau A."/>
            <person name="Chiapello H."/>
            <person name="Clermont O."/>
            <person name="Cruveiller S."/>
            <person name="Danchin A."/>
            <person name="Diard M."/>
            <person name="Dossat C."/>
            <person name="Karoui M.E."/>
            <person name="Frapy E."/>
            <person name="Garry L."/>
            <person name="Ghigo J.M."/>
            <person name="Gilles A.M."/>
            <person name="Johnson J."/>
            <person name="Le Bouguenec C."/>
            <person name="Lescat M."/>
            <person name="Mangenot S."/>
            <person name="Martinez-Jehanne V."/>
            <person name="Matic I."/>
            <person name="Nassif X."/>
            <person name="Oztas S."/>
            <person name="Petit M.A."/>
            <person name="Pichon C."/>
            <person name="Rouy Z."/>
            <person name="Ruf C.S."/>
            <person name="Schneider D."/>
            <person name="Tourret J."/>
            <person name="Vacherie B."/>
            <person name="Vallenet D."/>
            <person name="Medigue C."/>
            <person name="Rocha E.P.C."/>
            <person name="Denamur E."/>
        </authorList>
    </citation>
    <scope>NUCLEOTIDE SEQUENCE [LARGE SCALE GENOMIC DNA]</scope>
    <source>
        <strain>UMN026 / ExPEC</strain>
    </source>
</reference>
<comment type="similarity">
    <text evidence="1">Belongs to the UPF0229 family.</text>
</comment>
<feature type="chain" id="PRO_1000139644" description="UPF0229 protein YeaH">
    <location>
        <begin position="1"/>
        <end position="427"/>
    </location>
</feature>
<feature type="region of interest" description="Disordered" evidence="2">
    <location>
        <begin position="79"/>
        <end position="110"/>
    </location>
</feature>
<feature type="compositionally biased region" description="Basic and acidic residues" evidence="2">
    <location>
        <begin position="79"/>
        <end position="90"/>
    </location>
</feature>
<feature type="compositionally biased region" description="Gly residues" evidence="2">
    <location>
        <begin position="92"/>
        <end position="102"/>
    </location>
</feature>
<proteinExistence type="inferred from homology"/>